<sequence>MAGELRIMENKSREDINLSPVSKIEIYSFFDPFSSDCFKLSAILSKLRIEYNQYIRIRHILNPSLKVLTKCQAQSTSNFDNIALAYKAAELQGRVRAERFIHLMQNEIIPKRDIITESMICDCIQNAGIDLEVFKDDLQKSKLTESLKIDLHIAREMEIEQAPSLVFFSEDVHEEGLKVEGLYPYHIYTYIINELMGKPIEKNLPPKLETYIQQQQLVTMEELLTIYEWPEKLLNKELKKLAIQQKIEKLKYPDGDFWKSKMPKIKSK</sequence>
<gene>
    <name evidence="1" type="primary">spxH</name>
    <name type="ordered locus">SAB0868c</name>
</gene>
<accession>Q2YWY1</accession>
<proteinExistence type="inferred from homology"/>
<reference key="1">
    <citation type="journal article" date="2007" name="PLoS ONE">
        <title>Molecular correlates of host specialization in Staphylococcus aureus.</title>
        <authorList>
            <person name="Herron-Olson L."/>
            <person name="Fitzgerald J.R."/>
            <person name="Musser J.M."/>
            <person name="Kapur V."/>
        </authorList>
    </citation>
    <scope>NUCLEOTIDE SEQUENCE [LARGE SCALE GENOMIC DNA]</scope>
    <source>
        <strain>bovine RF122 / ET3-1</strain>
    </source>
</reference>
<feature type="chain" id="PRO_0000278690" description="ClpXP adapter protein SpxH">
    <location>
        <begin position="1"/>
        <end position="268"/>
    </location>
</feature>
<dbReference type="EMBL" id="AJ938182">
    <property type="protein sequence ID" value="CAI80556.1"/>
    <property type="status" value="ALT_INIT"/>
    <property type="molecule type" value="Genomic_DNA"/>
</dbReference>
<dbReference type="SMR" id="Q2YWY1"/>
<dbReference type="KEGG" id="sab:SAB0868c"/>
<dbReference type="HOGENOM" id="CLU_069785_0_0_9"/>
<dbReference type="GO" id="GO:0005737">
    <property type="term" value="C:cytoplasm"/>
    <property type="evidence" value="ECO:0007669"/>
    <property type="project" value="UniProtKB-SubCell"/>
</dbReference>
<dbReference type="Gene3D" id="3.40.30.10">
    <property type="entry name" value="Glutaredoxin"/>
    <property type="match status" value="1"/>
</dbReference>
<dbReference type="HAMAP" id="MF_02245">
    <property type="entry name" value="Adapter_SpxH"/>
    <property type="match status" value="1"/>
</dbReference>
<dbReference type="InterPro" id="IPR046404">
    <property type="entry name" value="Adapter_SpxH"/>
</dbReference>
<dbReference type="InterPro" id="IPR036249">
    <property type="entry name" value="Thioredoxin-like_sf"/>
</dbReference>
<dbReference type="PANTHER" id="PTHR13887:SF47">
    <property type="entry name" value="CLPXP ADAPTER PROTEIN SPXH"/>
    <property type="match status" value="1"/>
</dbReference>
<dbReference type="PANTHER" id="PTHR13887">
    <property type="entry name" value="GLUTATHIONE S-TRANSFERASE KAPPA"/>
    <property type="match status" value="1"/>
</dbReference>
<dbReference type="Pfam" id="PF13743">
    <property type="entry name" value="Thioredoxin_5"/>
    <property type="match status" value="1"/>
</dbReference>
<dbReference type="SUPFAM" id="SSF52833">
    <property type="entry name" value="Thioredoxin-like"/>
    <property type="match status" value="1"/>
</dbReference>
<organism>
    <name type="scientific">Staphylococcus aureus (strain bovine RF122 / ET3-1)</name>
    <dbReference type="NCBI Taxonomy" id="273036"/>
    <lineage>
        <taxon>Bacteria</taxon>
        <taxon>Bacillati</taxon>
        <taxon>Bacillota</taxon>
        <taxon>Bacilli</taxon>
        <taxon>Bacillales</taxon>
        <taxon>Staphylococcaceae</taxon>
        <taxon>Staphylococcus</taxon>
    </lineage>
</organism>
<comment type="function">
    <text evidence="1">Adapter protein required for efficient degradation of Spx by ClpXP under non-stress conditions. Interaction with Spx stabilizes Spx and exposes the C-terminus of Spx for recognition and proteolysis by ClpXP.</text>
</comment>
<comment type="subunit">
    <text evidence="1">Interacts with Spx.</text>
</comment>
<comment type="subcellular location">
    <subcellularLocation>
        <location evidence="1">Cytoplasm</location>
    </subcellularLocation>
</comment>
<comment type="similarity">
    <text evidence="1">Belongs to the SpxH family.</text>
</comment>
<comment type="sequence caution" evidence="2">
    <conflict type="erroneous initiation">
        <sequence resource="EMBL-CDS" id="CAI80556"/>
    </conflict>
</comment>
<keyword id="KW-0963">Cytoplasm</keyword>
<protein>
    <recommendedName>
        <fullName evidence="1">ClpXP adapter protein SpxH</fullName>
    </recommendedName>
</protein>
<evidence type="ECO:0000255" key="1">
    <source>
        <dbReference type="HAMAP-Rule" id="MF_02245"/>
    </source>
</evidence>
<evidence type="ECO:0000305" key="2"/>
<name>SPXH_STAAB</name>